<accession>Q8TLB1</accession>
<sequence length="247" mass="27921">MIPYVKMMPYVNEYDTPECKTLAETAKKSIRTPESLGLDRCIQCGACTASCPAARFTDYSPRQIVKKVLENDRSVLESEMIWSCFYCYSCNLRCPRNNSPVTIVQVLRQMAINEGIRVEKLAYFLEIGEHLGENGASKVPGAGIKNMEKDLGERWIGIKRKLEPIRSELGLSARDVRNTHGEVQAILESTGYFEREKWIKARVQEKGIRGFLKTDRTGTSCTEKKKNSGDLGFESDREYTGQEALTV</sequence>
<feature type="chain" id="PRO_0000443938" description="Ferredoxin:CoB-CoM heterodisulfide reductase subunit C">
    <location>
        <begin position="1"/>
        <end position="247"/>
    </location>
</feature>
<feature type="domain" description="4Fe-4S ferredoxin-type" evidence="1">
    <location>
        <begin position="32"/>
        <end position="62"/>
    </location>
</feature>
<feature type="region of interest" description="Disordered" evidence="2">
    <location>
        <begin position="216"/>
        <end position="247"/>
    </location>
</feature>
<feature type="compositionally biased region" description="Basic and acidic residues" evidence="2">
    <location>
        <begin position="216"/>
        <end position="240"/>
    </location>
</feature>
<feature type="binding site" evidence="1">
    <location>
        <position position="41"/>
    </location>
    <ligand>
        <name>[4Fe-4S] cluster</name>
        <dbReference type="ChEBI" id="CHEBI:49883"/>
        <label>1</label>
    </ligand>
</feature>
<feature type="binding site" evidence="1">
    <location>
        <position position="44"/>
    </location>
    <ligand>
        <name>[4Fe-4S] cluster</name>
        <dbReference type="ChEBI" id="CHEBI:49883"/>
        <label>1</label>
    </ligand>
</feature>
<feature type="binding site" evidence="1">
    <location>
        <position position="47"/>
    </location>
    <ligand>
        <name>[4Fe-4S] cluster</name>
        <dbReference type="ChEBI" id="CHEBI:49883"/>
        <label>1</label>
    </ligand>
</feature>
<feature type="binding site" evidence="1">
    <location>
        <position position="51"/>
    </location>
    <ligand>
        <name>[4Fe-4S] cluster</name>
        <dbReference type="ChEBI" id="CHEBI:49883"/>
        <label>2</label>
    </ligand>
</feature>
<feature type="binding site" evidence="1">
    <location>
        <position position="84"/>
    </location>
    <ligand>
        <name>[4Fe-4S] cluster</name>
        <dbReference type="ChEBI" id="CHEBI:49883"/>
        <label>2</label>
    </ligand>
</feature>
<feature type="binding site" evidence="1">
    <location>
        <position position="87"/>
    </location>
    <ligand>
        <name>[4Fe-4S] cluster</name>
        <dbReference type="ChEBI" id="CHEBI:49883"/>
        <label>2</label>
    </ligand>
</feature>
<feature type="binding site" evidence="1">
    <location>
        <position position="90"/>
    </location>
    <ligand>
        <name>[4Fe-4S] cluster</name>
        <dbReference type="ChEBI" id="CHEBI:49883"/>
        <label>2</label>
    </ligand>
</feature>
<feature type="binding site" evidence="1">
    <location>
        <position position="94"/>
    </location>
    <ligand>
        <name>[4Fe-4S] cluster</name>
        <dbReference type="ChEBI" id="CHEBI:49883"/>
        <label>1</label>
    </ligand>
</feature>
<name>HDRC1_METAC</name>
<gene>
    <name evidence="4" type="primary">hdrC1</name>
    <name evidence="7" type="ordered locus">MA_3127</name>
</gene>
<evidence type="ECO:0000255" key="1">
    <source>
        <dbReference type="PROSITE-ProRule" id="PRU00711"/>
    </source>
</evidence>
<evidence type="ECO:0000256" key="2">
    <source>
        <dbReference type="SAM" id="MobiDB-lite"/>
    </source>
</evidence>
<evidence type="ECO:0000269" key="3">
    <source>
    </source>
</evidence>
<evidence type="ECO:0000303" key="4">
    <source>
    </source>
</evidence>
<evidence type="ECO:0000305" key="5"/>
<evidence type="ECO:0000305" key="6">
    <source>
    </source>
</evidence>
<evidence type="ECO:0000312" key="7">
    <source>
        <dbReference type="EMBL" id="AAM06500.1"/>
    </source>
</evidence>
<reference key="1">
    <citation type="journal article" date="2002" name="Genome Res.">
        <title>The genome of Methanosarcina acetivorans reveals extensive metabolic and physiological diversity.</title>
        <authorList>
            <person name="Galagan J.E."/>
            <person name="Nusbaum C."/>
            <person name="Roy A."/>
            <person name="Endrizzi M.G."/>
            <person name="Macdonald P."/>
            <person name="FitzHugh W."/>
            <person name="Calvo S."/>
            <person name="Engels R."/>
            <person name="Smirnov S."/>
            <person name="Atnoor D."/>
            <person name="Brown A."/>
            <person name="Allen N."/>
            <person name="Naylor J."/>
            <person name="Stange-Thomann N."/>
            <person name="DeArellano K."/>
            <person name="Johnson R."/>
            <person name="Linton L."/>
            <person name="McEwan P."/>
            <person name="McKernan K."/>
            <person name="Talamas J."/>
            <person name="Tirrell A."/>
            <person name="Ye W."/>
            <person name="Zimmer A."/>
            <person name="Barber R.D."/>
            <person name="Cann I."/>
            <person name="Graham D.E."/>
            <person name="Grahame D.A."/>
            <person name="Guss A.M."/>
            <person name="Hedderich R."/>
            <person name="Ingram-Smith C."/>
            <person name="Kuettner H.C."/>
            <person name="Krzycki J.A."/>
            <person name="Leigh J.A."/>
            <person name="Li W."/>
            <person name="Liu J."/>
            <person name="Mukhopadhyay B."/>
            <person name="Reeve J.N."/>
            <person name="Smith K."/>
            <person name="Springer T.A."/>
            <person name="Umayam L.A."/>
            <person name="White O."/>
            <person name="White R.H."/>
            <person name="de Macario E.C."/>
            <person name="Ferry J.G."/>
            <person name="Jarrell K.F."/>
            <person name="Jing H."/>
            <person name="Macario A.J.L."/>
            <person name="Paulsen I.T."/>
            <person name="Pritchett M."/>
            <person name="Sowers K.R."/>
            <person name="Swanson R.V."/>
            <person name="Zinder S.H."/>
            <person name="Lander E."/>
            <person name="Metcalf W.W."/>
            <person name="Birren B."/>
        </authorList>
    </citation>
    <scope>NUCLEOTIDE SEQUENCE [LARGE SCALE GENOMIC DNA]</scope>
    <source>
        <strain>ATCC 35395 / DSM 2834 / JCM 12185 / C2A</strain>
    </source>
</reference>
<reference key="2">
    <citation type="journal article" date="2010" name="Mol. Microbiol.">
        <title>Methanogenesis by Methanosarcina acetivorans involves two structurally and functionally distinct classes of heterodisulfide reductase.</title>
        <authorList>
            <person name="Buan N.R."/>
            <person name="Metcalf W.W."/>
        </authorList>
    </citation>
    <scope>FUNCTION</scope>
    <scope>CATALYTIC ACTIVITY</scope>
    <scope>SUBUNIT</scope>
    <scope>INDUCTION</scope>
    <scope>DISRUPTION PHENOTYPE</scope>
    <source>
        <strain>ATCC 35395 / DSM 2834 / JCM 12185 / C2A</strain>
    </source>
</reference>
<proteinExistence type="evidence at protein level"/>
<dbReference type="EC" id="1.8.7.3" evidence="6"/>
<dbReference type="EMBL" id="AE010299">
    <property type="protein sequence ID" value="AAM06500.1"/>
    <property type="molecule type" value="Genomic_DNA"/>
</dbReference>
<dbReference type="RefSeq" id="WP_011023065.1">
    <property type="nucleotide sequence ID" value="NC_003552.1"/>
</dbReference>
<dbReference type="SMR" id="Q8TLB1"/>
<dbReference type="STRING" id="188937.MA_3127"/>
<dbReference type="EnsemblBacteria" id="AAM06500">
    <property type="protein sequence ID" value="AAM06500"/>
    <property type="gene ID" value="MA_3127"/>
</dbReference>
<dbReference type="GeneID" id="1475021"/>
<dbReference type="KEGG" id="mac:MA_3127"/>
<dbReference type="HOGENOM" id="CLU_100474_0_0_2"/>
<dbReference type="InParanoid" id="Q8TLB1"/>
<dbReference type="PhylomeDB" id="Q8TLB1"/>
<dbReference type="BioCyc" id="MetaCyc:MONOMER-20158"/>
<dbReference type="UniPathway" id="UPA00647">
    <property type="reaction ID" value="UER00700"/>
</dbReference>
<dbReference type="Proteomes" id="UP000002487">
    <property type="component" value="Chromosome"/>
</dbReference>
<dbReference type="GO" id="GO:0005737">
    <property type="term" value="C:cytoplasm"/>
    <property type="evidence" value="ECO:0007669"/>
    <property type="project" value="UniProtKB-SubCell"/>
</dbReference>
<dbReference type="GO" id="GO:0051539">
    <property type="term" value="F:4 iron, 4 sulfur cluster binding"/>
    <property type="evidence" value="ECO:0007669"/>
    <property type="project" value="UniProtKB-KW"/>
</dbReference>
<dbReference type="GO" id="GO:0046872">
    <property type="term" value="F:metal ion binding"/>
    <property type="evidence" value="ECO:0007669"/>
    <property type="project" value="UniProtKB-KW"/>
</dbReference>
<dbReference type="GO" id="GO:0016491">
    <property type="term" value="F:oxidoreductase activity"/>
    <property type="evidence" value="ECO:0007669"/>
    <property type="project" value="UniProtKB-KW"/>
</dbReference>
<dbReference type="GO" id="GO:0015948">
    <property type="term" value="P:methanogenesis"/>
    <property type="evidence" value="ECO:0007669"/>
    <property type="project" value="UniProtKB-KW"/>
</dbReference>
<dbReference type="Gene3D" id="1.10.1060.10">
    <property type="entry name" value="Alpha-helical ferredoxin"/>
    <property type="match status" value="1"/>
</dbReference>
<dbReference type="InterPro" id="IPR017896">
    <property type="entry name" value="4Fe4S_Fe-S-bd"/>
</dbReference>
<dbReference type="InterPro" id="IPR017900">
    <property type="entry name" value="4Fe4S_Fe_S_CS"/>
</dbReference>
<dbReference type="InterPro" id="IPR053646">
    <property type="entry name" value="HdrC_heterodisulfide_reductase"/>
</dbReference>
<dbReference type="InterPro" id="IPR051460">
    <property type="entry name" value="HdrC_iron-sulfur_subunit"/>
</dbReference>
<dbReference type="InterPro" id="IPR009051">
    <property type="entry name" value="Helical_ferredxn"/>
</dbReference>
<dbReference type="NCBIfam" id="NF041779">
    <property type="entry name" value="hetero_SS_HdrC"/>
    <property type="match status" value="1"/>
</dbReference>
<dbReference type="PANTHER" id="PTHR43255:SF1">
    <property type="entry name" value="IRON-SULFUR-BINDING OXIDOREDUCTASE FADF-RELATED"/>
    <property type="match status" value="1"/>
</dbReference>
<dbReference type="PANTHER" id="PTHR43255">
    <property type="entry name" value="IRON-SULFUR-BINDING OXIDOREDUCTASE FADF-RELATED-RELATED"/>
    <property type="match status" value="1"/>
</dbReference>
<dbReference type="Pfam" id="PF13183">
    <property type="entry name" value="Fer4_8"/>
    <property type="match status" value="1"/>
</dbReference>
<dbReference type="SUPFAM" id="SSF46548">
    <property type="entry name" value="alpha-helical ferredoxin"/>
    <property type="match status" value="1"/>
</dbReference>
<dbReference type="PROSITE" id="PS00198">
    <property type="entry name" value="4FE4S_FER_1"/>
    <property type="match status" value="2"/>
</dbReference>
<dbReference type="PROSITE" id="PS51379">
    <property type="entry name" value="4FE4S_FER_2"/>
    <property type="match status" value="1"/>
</dbReference>
<organism>
    <name type="scientific">Methanosarcina acetivorans (strain ATCC 35395 / DSM 2834 / JCM 12185 / C2A)</name>
    <dbReference type="NCBI Taxonomy" id="188937"/>
    <lineage>
        <taxon>Archaea</taxon>
        <taxon>Methanobacteriati</taxon>
        <taxon>Methanobacteriota</taxon>
        <taxon>Stenosarchaea group</taxon>
        <taxon>Methanomicrobia</taxon>
        <taxon>Methanosarcinales</taxon>
        <taxon>Methanosarcinaceae</taxon>
        <taxon>Methanosarcina</taxon>
    </lineage>
</organism>
<keyword id="KW-0004">4Fe-4S</keyword>
<keyword id="KW-0963">Cytoplasm</keyword>
<keyword id="KW-0408">Iron</keyword>
<keyword id="KW-0411">Iron-sulfur</keyword>
<keyword id="KW-0479">Metal-binding</keyword>
<keyword id="KW-0484">Methanogenesis</keyword>
<keyword id="KW-0560">Oxidoreductase</keyword>
<keyword id="KW-1185">Reference proteome</keyword>
<protein>
    <recommendedName>
        <fullName evidence="5">Ferredoxin:CoB-CoM heterodisulfide reductase subunit C</fullName>
        <ecNumber evidence="6">1.8.7.3</ecNumber>
    </recommendedName>
</protein>
<comment type="function">
    <text evidence="3">Part of a complex that catalyzes the reversible reduction of CoM-S-S-CoB to the thiol-coenzymes H-S-CoM (coenzyme M) and H-S-CoB (coenzyme B). Probably involved in methylotrophic methanogenesis but not in aceticlastic methanogenesis.</text>
</comment>
<comment type="catalytic activity">
    <reaction evidence="6">
        <text>coenzyme B + coenzyme M + 2 oxidized [2Fe-2S]-[ferredoxin] = coenzyme M-coenzyme B heterodisulfide + 2 reduced [2Fe-2S]-[ferredoxin] + 2 H(+)</text>
        <dbReference type="Rhea" id="RHEA:55160"/>
        <dbReference type="Rhea" id="RHEA-COMP:10000"/>
        <dbReference type="Rhea" id="RHEA-COMP:10001"/>
        <dbReference type="ChEBI" id="CHEBI:15378"/>
        <dbReference type="ChEBI" id="CHEBI:33737"/>
        <dbReference type="ChEBI" id="CHEBI:33738"/>
        <dbReference type="ChEBI" id="CHEBI:58319"/>
        <dbReference type="ChEBI" id="CHEBI:58411"/>
        <dbReference type="ChEBI" id="CHEBI:58596"/>
        <dbReference type="EC" id="1.8.7.3"/>
    </reaction>
</comment>
<comment type="cofactor">
    <cofactor evidence="1">
        <name>[4Fe-4S] cluster</name>
        <dbReference type="ChEBI" id="CHEBI:49883"/>
    </cofactor>
    <text evidence="1">Binds 2 [4Fe-4S] cluster.</text>
</comment>
<comment type="pathway">
    <text evidence="5">Cofactor metabolism; coenzyme M-coenzyme B heterodisulfide reduction; coenzyme B and coenzyme M from coenzyme M-coenzyme B heterodisulfide: step 1/1.</text>
</comment>
<comment type="subunit">
    <text evidence="3">The ferredoxin:CoB-CoM heterodisulfide reductase is composed of three subunits; HdrA1, HdrB1 and HdrC1.</text>
</comment>
<comment type="subcellular location">
    <subcellularLocation>
        <location evidence="5">Cytoplasm</location>
    </subcellularLocation>
</comment>
<comment type="induction">
    <text evidence="3">Induced on trimethylamine or methanol, but not on acetate as the sole energy source.</text>
</comment>
<comment type="disruption phenotype">
    <text evidence="3">Triple hdrA1C1B1 deletion decreases methane production from methanol, but does not affect methanogenesis from acetate. Deletion results in up-regulation of CoB-SH and CoM-SH synthesis and transport, and methylsulfide methyltransferases.</text>
</comment>
<comment type="similarity">
    <text evidence="5">Belongs to the HdrC family.</text>
</comment>